<accession>C1B0C2</accession>
<feature type="chain" id="PRO_1000192906" description="Phosphatidylserine decarboxylase beta chain" evidence="1">
    <location>
        <begin position="1"/>
        <end position="205"/>
    </location>
</feature>
<feature type="chain" id="PRO_1000147644" description="Phosphatidylserine decarboxylase alpha chain" evidence="1">
    <location>
        <begin position="206"/>
        <end position="237"/>
    </location>
</feature>
<feature type="active site" description="Schiff-base intermediate with substrate; via pyruvic acid" evidence="1">
    <location>
        <position position="206"/>
    </location>
</feature>
<feature type="site" description="Cleavage (non-hydrolytic); by autocatalysis" evidence="1">
    <location>
        <begin position="205"/>
        <end position="206"/>
    </location>
</feature>
<feature type="modified residue" description="Pyruvic acid (Ser); by autocatalysis" evidence="1">
    <location>
        <position position="206"/>
    </location>
</feature>
<protein>
    <recommendedName>
        <fullName evidence="1">Phosphatidylserine decarboxylase proenzyme</fullName>
        <ecNumber evidence="1">4.1.1.65</ecNumber>
    </recommendedName>
    <component>
        <recommendedName>
            <fullName evidence="1">Phosphatidylserine decarboxylase alpha chain</fullName>
        </recommendedName>
    </component>
    <component>
        <recommendedName>
            <fullName evidence="1">Phosphatidylserine decarboxylase beta chain</fullName>
        </recommendedName>
    </component>
</protein>
<organism>
    <name type="scientific">Rhodococcus opacus (strain B4)</name>
    <dbReference type="NCBI Taxonomy" id="632772"/>
    <lineage>
        <taxon>Bacteria</taxon>
        <taxon>Bacillati</taxon>
        <taxon>Actinomycetota</taxon>
        <taxon>Actinomycetes</taxon>
        <taxon>Mycobacteriales</taxon>
        <taxon>Nocardiaceae</taxon>
        <taxon>Rhodococcus</taxon>
    </lineage>
</organism>
<comment type="function">
    <text evidence="1">Catalyzes the formation of phosphatidylethanolamine (PtdEtn) from phosphatidylserine (PtdSer).</text>
</comment>
<comment type="catalytic activity">
    <reaction evidence="1">
        <text>a 1,2-diacyl-sn-glycero-3-phospho-L-serine + H(+) = a 1,2-diacyl-sn-glycero-3-phosphoethanolamine + CO2</text>
        <dbReference type="Rhea" id="RHEA:20828"/>
        <dbReference type="ChEBI" id="CHEBI:15378"/>
        <dbReference type="ChEBI" id="CHEBI:16526"/>
        <dbReference type="ChEBI" id="CHEBI:57262"/>
        <dbReference type="ChEBI" id="CHEBI:64612"/>
        <dbReference type="EC" id="4.1.1.65"/>
    </reaction>
</comment>
<comment type="cofactor">
    <cofactor evidence="1">
        <name>pyruvate</name>
        <dbReference type="ChEBI" id="CHEBI:15361"/>
    </cofactor>
    <text evidence="1">Binds 1 pyruvoyl group covalently per subunit.</text>
</comment>
<comment type="pathway">
    <text evidence="1">Phospholipid metabolism; phosphatidylethanolamine biosynthesis; phosphatidylethanolamine from CDP-diacylglycerol: step 2/2.</text>
</comment>
<comment type="subunit">
    <text evidence="1">Heterodimer of a large membrane-associated beta subunit and a small pyruvoyl-containing alpha subunit.</text>
</comment>
<comment type="subcellular location">
    <subcellularLocation>
        <location evidence="1">Cell membrane</location>
        <topology evidence="1">Peripheral membrane protein</topology>
    </subcellularLocation>
</comment>
<comment type="PTM">
    <text evidence="1">Is synthesized initially as an inactive proenzyme. Formation of the active enzyme involves a self-maturation process in which the active site pyruvoyl group is generated from an internal serine residue via an autocatalytic post-translational modification. Two non-identical subunits are generated from the proenzyme in this reaction, and the pyruvate is formed at the N-terminus of the alpha chain, which is derived from the carboxyl end of the proenzyme. The post-translation cleavage follows an unusual pathway, termed non-hydrolytic serinolysis, in which the side chain hydroxyl group of the serine supplies its oxygen atom to form the C-terminus of the beta chain, while the remainder of the serine residue undergoes an oxidative deamination to produce ammonia and the pyruvoyl prosthetic group on the alpha chain.</text>
</comment>
<comment type="similarity">
    <text evidence="1">Belongs to the phosphatidylserine decarboxylase family. PSD-A subfamily.</text>
</comment>
<proteinExistence type="inferred from homology"/>
<name>PSD_RHOOB</name>
<reference key="1">
    <citation type="submission" date="2009-03" db="EMBL/GenBank/DDBJ databases">
        <title>Comparison of the complete genome sequences of Rhodococcus erythropolis PR4 and Rhodococcus opacus B4.</title>
        <authorList>
            <person name="Takarada H."/>
            <person name="Sekine M."/>
            <person name="Hosoyama A."/>
            <person name="Yamada R."/>
            <person name="Fujisawa T."/>
            <person name="Omata S."/>
            <person name="Shimizu A."/>
            <person name="Tsukatani N."/>
            <person name="Tanikawa S."/>
            <person name="Fujita N."/>
            <person name="Harayama S."/>
        </authorList>
    </citation>
    <scope>NUCLEOTIDE SEQUENCE [LARGE SCALE GENOMIC DNA]</scope>
    <source>
        <strain>B4</strain>
    </source>
</reference>
<dbReference type="EC" id="4.1.1.65" evidence="1"/>
<dbReference type="EMBL" id="AP011115">
    <property type="protein sequence ID" value="BAH50122.1"/>
    <property type="molecule type" value="Genomic_DNA"/>
</dbReference>
<dbReference type="RefSeq" id="WP_012689079.1">
    <property type="nucleotide sequence ID" value="NC_012522.1"/>
</dbReference>
<dbReference type="SMR" id="C1B0C2"/>
<dbReference type="STRING" id="632772.ROP_18750"/>
<dbReference type="KEGG" id="rop:ROP_18750"/>
<dbReference type="PATRIC" id="fig|632772.20.peg.1967"/>
<dbReference type="HOGENOM" id="CLU_072492_0_0_11"/>
<dbReference type="OrthoDB" id="9790893at2"/>
<dbReference type="UniPathway" id="UPA00558">
    <property type="reaction ID" value="UER00616"/>
</dbReference>
<dbReference type="Proteomes" id="UP000002212">
    <property type="component" value="Chromosome"/>
</dbReference>
<dbReference type="GO" id="GO:0005886">
    <property type="term" value="C:plasma membrane"/>
    <property type="evidence" value="ECO:0007669"/>
    <property type="project" value="UniProtKB-SubCell"/>
</dbReference>
<dbReference type="GO" id="GO:0004609">
    <property type="term" value="F:phosphatidylserine decarboxylase activity"/>
    <property type="evidence" value="ECO:0007669"/>
    <property type="project" value="UniProtKB-UniRule"/>
</dbReference>
<dbReference type="GO" id="GO:0006646">
    <property type="term" value="P:phosphatidylethanolamine biosynthetic process"/>
    <property type="evidence" value="ECO:0007669"/>
    <property type="project" value="UniProtKB-UniRule"/>
</dbReference>
<dbReference type="HAMAP" id="MF_00664">
    <property type="entry name" value="PS_decarb_PSD_A"/>
    <property type="match status" value="1"/>
</dbReference>
<dbReference type="InterPro" id="IPR003817">
    <property type="entry name" value="PS_Dcarbxylase"/>
</dbReference>
<dbReference type="InterPro" id="IPR033175">
    <property type="entry name" value="PSD-A"/>
</dbReference>
<dbReference type="NCBIfam" id="NF003679">
    <property type="entry name" value="PRK05305.1-3"/>
    <property type="match status" value="1"/>
</dbReference>
<dbReference type="PANTHER" id="PTHR35809">
    <property type="entry name" value="ARCHAETIDYLSERINE DECARBOXYLASE PROENZYME-RELATED"/>
    <property type="match status" value="1"/>
</dbReference>
<dbReference type="PANTHER" id="PTHR35809:SF1">
    <property type="entry name" value="ARCHAETIDYLSERINE DECARBOXYLASE PROENZYME-RELATED"/>
    <property type="match status" value="1"/>
</dbReference>
<dbReference type="Pfam" id="PF02666">
    <property type="entry name" value="PS_Dcarbxylase"/>
    <property type="match status" value="1"/>
</dbReference>
<sequence length="237" mass="24944">MARKPTPPGTPQPTSVGHIVDLVRGAVPPLHPAGLPFVLAPLGVAVLGRNRKWVRRGALTSAAACAAFFRHPHRVPPNRVGVAVAPADGEVALVDSAVPPSELDMGTEPLPRVSIFLSVLDVHVQRSPVGGEVTKVVHRSGQFLSADLADASEVNERNSMLLHTAEGHDVAVIQIAGLLARRIVCDAKVGDTLPIGDTYGLIRFGSRVDTYFPAGTTLLAERGQRTIGAETVIAQLP</sequence>
<keyword id="KW-1003">Cell membrane</keyword>
<keyword id="KW-0210">Decarboxylase</keyword>
<keyword id="KW-0444">Lipid biosynthesis</keyword>
<keyword id="KW-0443">Lipid metabolism</keyword>
<keyword id="KW-0456">Lyase</keyword>
<keyword id="KW-0472">Membrane</keyword>
<keyword id="KW-0594">Phospholipid biosynthesis</keyword>
<keyword id="KW-1208">Phospholipid metabolism</keyword>
<keyword id="KW-0670">Pyruvate</keyword>
<keyword id="KW-0865">Zymogen</keyword>
<evidence type="ECO:0000255" key="1">
    <source>
        <dbReference type="HAMAP-Rule" id="MF_00664"/>
    </source>
</evidence>
<gene>
    <name evidence="1" type="primary">psd</name>
    <name type="ordered locus">ROP_18750</name>
</gene>